<proteinExistence type="inferred from homology"/>
<sequence>MASKLLRKLAYPTLPVKGKIYDPFSKFQQNLYGGSKTEAGNNKIPKFGHKTRRVWIPNGHSKWLYSNVLEEKFHLYVTSRVLRTIDKEGGLDEYLVKSTPSRLKSLGLRGVELRALVLHKLGAKNPILEKLPSDSGAQKRYLEKVKDVVLKLNRSKKLYQQIKSLVGKERSVNTSV</sequence>
<comment type="function">
    <text evidence="1">Component of the mitochondrial ribosome (mitoribosome), a dedicated translation machinery responsible for the synthesis of mitochondrial genome-encoded proteins, including at least some of the essential transmembrane subunits of the mitochondrial respiratory chain. The mitoribosomes are attached to the mitochondrial inner membrane and translation products are cotranslationally integrated into the membrane.</text>
</comment>
<comment type="subunit">
    <text evidence="1">Component of the mitochondrial large ribosomal subunit (mt-LSU). Mature yeast 74S mitochondrial ribosomes consist of a small (37S) and a large (54S) subunit. The 37S small subunit contains a 15S ribosomal RNA (15S mt-rRNA) and at least 32 different proteins. The 54S large subunit contains a 21S rRNA (21S mt-rRNA) and at least 45 different proteins.</text>
</comment>
<comment type="subcellular location">
    <subcellularLocation>
        <location evidence="3">Cytoplasm</location>
    </subcellularLocation>
    <subcellularLocation>
        <location evidence="1">Mitochondrion</location>
    </subcellularLocation>
</comment>
<comment type="similarity">
    <text evidence="4">Belongs to the bacterial ribosomal protein bL28 family.</text>
</comment>
<evidence type="ECO:0000250" key="1">
    <source>
        <dbReference type="UniProtKB" id="P36525"/>
    </source>
</evidence>
<evidence type="ECO:0000255" key="2"/>
<evidence type="ECO:0000269" key="3">
    <source>
    </source>
</evidence>
<evidence type="ECO:0000305" key="4"/>
<reference key="1">
    <citation type="journal article" date="2002" name="Nature">
        <title>The genome sequence of Schizosaccharomyces pombe.</title>
        <authorList>
            <person name="Wood V."/>
            <person name="Gwilliam R."/>
            <person name="Rajandream M.A."/>
            <person name="Lyne M.H."/>
            <person name="Lyne R."/>
            <person name="Stewart A."/>
            <person name="Sgouros J.G."/>
            <person name="Peat N."/>
            <person name="Hayles J."/>
            <person name="Baker S.G."/>
            <person name="Basham D."/>
            <person name="Bowman S."/>
            <person name="Brooks K."/>
            <person name="Brown D."/>
            <person name="Brown S."/>
            <person name="Chillingworth T."/>
            <person name="Churcher C.M."/>
            <person name="Collins M."/>
            <person name="Connor R."/>
            <person name="Cronin A."/>
            <person name="Davis P."/>
            <person name="Feltwell T."/>
            <person name="Fraser A."/>
            <person name="Gentles S."/>
            <person name="Goble A."/>
            <person name="Hamlin N."/>
            <person name="Harris D.E."/>
            <person name="Hidalgo J."/>
            <person name="Hodgson G."/>
            <person name="Holroyd S."/>
            <person name="Hornsby T."/>
            <person name="Howarth S."/>
            <person name="Huckle E.J."/>
            <person name="Hunt S."/>
            <person name="Jagels K."/>
            <person name="James K.D."/>
            <person name="Jones L."/>
            <person name="Jones M."/>
            <person name="Leather S."/>
            <person name="McDonald S."/>
            <person name="McLean J."/>
            <person name="Mooney P."/>
            <person name="Moule S."/>
            <person name="Mungall K.L."/>
            <person name="Murphy L.D."/>
            <person name="Niblett D."/>
            <person name="Odell C."/>
            <person name="Oliver K."/>
            <person name="O'Neil S."/>
            <person name="Pearson D."/>
            <person name="Quail M.A."/>
            <person name="Rabbinowitsch E."/>
            <person name="Rutherford K.M."/>
            <person name="Rutter S."/>
            <person name="Saunders D."/>
            <person name="Seeger K."/>
            <person name="Sharp S."/>
            <person name="Skelton J."/>
            <person name="Simmonds M.N."/>
            <person name="Squares R."/>
            <person name="Squares S."/>
            <person name="Stevens K."/>
            <person name="Taylor K."/>
            <person name="Taylor R.G."/>
            <person name="Tivey A."/>
            <person name="Walsh S.V."/>
            <person name="Warren T."/>
            <person name="Whitehead S."/>
            <person name="Woodward J.R."/>
            <person name="Volckaert G."/>
            <person name="Aert R."/>
            <person name="Robben J."/>
            <person name="Grymonprez B."/>
            <person name="Weltjens I."/>
            <person name="Vanstreels E."/>
            <person name="Rieger M."/>
            <person name="Schaefer M."/>
            <person name="Mueller-Auer S."/>
            <person name="Gabel C."/>
            <person name="Fuchs M."/>
            <person name="Duesterhoeft A."/>
            <person name="Fritzc C."/>
            <person name="Holzer E."/>
            <person name="Moestl D."/>
            <person name="Hilbert H."/>
            <person name="Borzym K."/>
            <person name="Langer I."/>
            <person name="Beck A."/>
            <person name="Lehrach H."/>
            <person name="Reinhardt R."/>
            <person name="Pohl T.M."/>
            <person name="Eger P."/>
            <person name="Zimmermann W."/>
            <person name="Wedler H."/>
            <person name="Wambutt R."/>
            <person name="Purnelle B."/>
            <person name="Goffeau A."/>
            <person name="Cadieu E."/>
            <person name="Dreano S."/>
            <person name="Gloux S."/>
            <person name="Lelaure V."/>
            <person name="Mottier S."/>
            <person name="Galibert F."/>
            <person name="Aves S.J."/>
            <person name="Xiang Z."/>
            <person name="Hunt C."/>
            <person name="Moore K."/>
            <person name="Hurst S.M."/>
            <person name="Lucas M."/>
            <person name="Rochet M."/>
            <person name="Gaillardin C."/>
            <person name="Tallada V.A."/>
            <person name="Garzon A."/>
            <person name="Thode G."/>
            <person name="Daga R.R."/>
            <person name="Cruzado L."/>
            <person name="Jimenez J."/>
            <person name="Sanchez M."/>
            <person name="del Rey F."/>
            <person name="Benito J."/>
            <person name="Dominguez A."/>
            <person name="Revuelta J.L."/>
            <person name="Moreno S."/>
            <person name="Armstrong J."/>
            <person name="Forsburg S.L."/>
            <person name="Cerutti L."/>
            <person name="Lowe T."/>
            <person name="McCombie W.R."/>
            <person name="Paulsen I."/>
            <person name="Potashkin J."/>
            <person name="Shpakovski G.V."/>
            <person name="Ussery D."/>
            <person name="Barrell B.G."/>
            <person name="Nurse P."/>
        </authorList>
    </citation>
    <scope>NUCLEOTIDE SEQUENCE [LARGE SCALE GENOMIC DNA]</scope>
    <source>
        <strain>972 / ATCC 24843</strain>
    </source>
</reference>
<reference key="2">
    <citation type="journal article" date="2006" name="Nat. Biotechnol.">
        <title>ORFeome cloning and global analysis of protein localization in the fission yeast Schizosaccharomyces pombe.</title>
        <authorList>
            <person name="Matsuyama A."/>
            <person name="Arai R."/>
            <person name="Yashiroda Y."/>
            <person name="Shirai A."/>
            <person name="Kamata A."/>
            <person name="Sekido S."/>
            <person name="Kobayashi Y."/>
            <person name="Hashimoto A."/>
            <person name="Hamamoto M."/>
            <person name="Hiraoka Y."/>
            <person name="Horinouchi S."/>
            <person name="Yoshida M."/>
        </authorList>
    </citation>
    <scope>SUBCELLULAR LOCATION [LARGE SCALE ANALYSIS]</scope>
</reference>
<dbReference type="EMBL" id="CU329671">
    <property type="protein sequence ID" value="CAA18428.1"/>
    <property type="molecule type" value="Genomic_DNA"/>
</dbReference>
<dbReference type="PIR" id="T39438">
    <property type="entry name" value="T39438"/>
</dbReference>
<dbReference type="RefSeq" id="NP_595913.1">
    <property type="nucleotide sequence ID" value="NM_001021821.2"/>
</dbReference>
<dbReference type="SMR" id="O60091"/>
<dbReference type="ComplexPortal" id="CPX-10323">
    <property type="entry name" value="54S mitochondrial large ribosomal subunit"/>
</dbReference>
<dbReference type="FunCoup" id="O60091">
    <property type="interactions" value="227"/>
</dbReference>
<dbReference type="STRING" id="284812.O60091"/>
<dbReference type="iPTMnet" id="O60091"/>
<dbReference type="PaxDb" id="4896-SPBC14C8.10.1"/>
<dbReference type="EnsemblFungi" id="SPBC14C8.10.1">
    <property type="protein sequence ID" value="SPBC14C8.10.1:pep"/>
    <property type="gene ID" value="SPBC14C8.10"/>
</dbReference>
<dbReference type="PomBase" id="SPBC14C8.10">
    <property type="gene designation" value="mrpl24"/>
</dbReference>
<dbReference type="VEuPathDB" id="FungiDB:SPBC14C8.10"/>
<dbReference type="eggNOG" id="KOG3278">
    <property type="taxonomic scope" value="Eukaryota"/>
</dbReference>
<dbReference type="HOGENOM" id="CLU_1390956_0_0_1"/>
<dbReference type="InParanoid" id="O60091"/>
<dbReference type="OMA" id="KIPKFGH"/>
<dbReference type="PhylomeDB" id="O60091"/>
<dbReference type="PRO" id="PR:O60091"/>
<dbReference type="Proteomes" id="UP000002485">
    <property type="component" value="Chromosome II"/>
</dbReference>
<dbReference type="GO" id="GO:0005737">
    <property type="term" value="C:cytoplasm"/>
    <property type="evidence" value="ECO:0007005"/>
    <property type="project" value="PomBase"/>
</dbReference>
<dbReference type="GO" id="GO:0005762">
    <property type="term" value="C:mitochondrial large ribosomal subunit"/>
    <property type="evidence" value="ECO:0000318"/>
    <property type="project" value="GO_Central"/>
</dbReference>
<dbReference type="GO" id="GO:0003735">
    <property type="term" value="F:structural constituent of ribosome"/>
    <property type="evidence" value="ECO:0000318"/>
    <property type="project" value="GO_Central"/>
</dbReference>
<dbReference type="GO" id="GO:0032543">
    <property type="term" value="P:mitochondrial translation"/>
    <property type="evidence" value="ECO:0000250"/>
    <property type="project" value="PomBase"/>
</dbReference>
<dbReference type="FunFam" id="2.30.170.40:FF:000003">
    <property type="entry name" value="54S ribosomal protein L24"/>
    <property type="match status" value="1"/>
</dbReference>
<dbReference type="Gene3D" id="2.30.170.40">
    <property type="entry name" value="Ribosomal protein L28/L24"/>
    <property type="match status" value="1"/>
</dbReference>
<dbReference type="InterPro" id="IPR026569">
    <property type="entry name" value="Ribosomal_bL28"/>
</dbReference>
<dbReference type="InterPro" id="IPR034704">
    <property type="entry name" value="Ribosomal_bL28/bL31-like_sf"/>
</dbReference>
<dbReference type="InterPro" id="IPR037147">
    <property type="entry name" value="Ribosomal_bL28_sf"/>
</dbReference>
<dbReference type="PANTHER" id="PTHR13528">
    <property type="entry name" value="39S RIBOSOMAL PROTEIN L28, MITOCHONDRIAL"/>
    <property type="match status" value="1"/>
</dbReference>
<dbReference type="PANTHER" id="PTHR13528:SF2">
    <property type="entry name" value="LARGE RIBOSOMAL SUBUNIT PROTEIN BL28M"/>
    <property type="match status" value="1"/>
</dbReference>
<dbReference type="Pfam" id="PF00830">
    <property type="entry name" value="Ribosomal_L28"/>
    <property type="match status" value="1"/>
</dbReference>
<dbReference type="SUPFAM" id="SSF143800">
    <property type="entry name" value="L28p-like"/>
    <property type="match status" value="1"/>
</dbReference>
<organism>
    <name type="scientific">Schizosaccharomyces pombe (strain 972 / ATCC 24843)</name>
    <name type="common">Fission yeast</name>
    <dbReference type="NCBI Taxonomy" id="284812"/>
    <lineage>
        <taxon>Eukaryota</taxon>
        <taxon>Fungi</taxon>
        <taxon>Dikarya</taxon>
        <taxon>Ascomycota</taxon>
        <taxon>Taphrinomycotina</taxon>
        <taxon>Schizosaccharomycetes</taxon>
        <taxon>Schizosaccharomycetales</taxon>
        <taxon>Schizosaccharomycetaceae</taxon>
        <taxon>Schizosaccharomyces</taxon>
    </lineage>
</organism>
<accession>O60091</accession>
<keyword id="KW-0963">Cytoplasm</keyword>
<keyword id="KW-0496">Mitochondrion</keyword>
<keyword id="KW-1185">Reference proteome</keyword>
<keyword id="KW-0687">Ribonucleoprotein</keyword>
<keyword id="KW-0689">Ribosomal protein</keyword>
<keyword id="KW-0809">Transit peptide</keyword>
<feature type="transit peptide" description="Mitochondrion" evidence="2">
    <location>
        <begin position="1"/>
        <end position="8"/>
    </location>
</feature>
<feature type="chain" id="PRO_0000317083" description="Large ribosomal subunit protein bL28m">
    <location>
        <begin position="9"/>
        <end position="176"/>
    </location>
</feature>
<protein>
    <recommendedName>
        <fullName evidence="4">Large ribosomal subunit protein bL28m</fullName>
    </recommendedName>
    <alternativeName>
        <fullName>54S ribosomal protein L24, mitochondrial</fullName>
    </alternativeName>
</protein>
<gene>
    <name type="primary">mrpl24</name>
    <name type="ORF">SPBC14C8.10</name>
</gene>
<name>RM24_SCHPO</name>